<accession>P67078</accession>
<accession>Q83FW3</accession>
<accession>Q83NR7</accession>
<name>UNG_TROWT</name>
<organism>
    <name type="scientific">Tropheryma whipplei (strain Twist)</name>
    <name type="common">Whipple's bacillus</name>
    <dbReference type="NCBI Taxonomy" id="203267"/>
    <lineage>
        <taxon>Bacteria</taxon>
        <taxon>Bacillati</taxon>
        <taxon>Actinomycetota</taxon>
        <taxon>Actinomycetes</taxon>
        <taxon>Micrococcales</taxon>
        <taxon>Tropherymataceae</taxon>
        <taxon>Tropheryma</taxon>
    </lineage>
</organism>
<reference key="1">
    <citation type="journal article" date="2003" name="Genome Res.">
        <title>Tropheryma whipplei twist: a human pathogenic Actinobacteria with a reduced genome.</title>
        <authorList>
            <person name="Raoult D."/>
            <person name="Ogata H."/>
            <person name="Audic S."/>
            <person name="Robert C."/>
            <person name="Suhre K."/>
            <person name="Drancourt M."/>
            <person name="Claverie J.-M."/>
        </authorList>
    </citation>
    <scope>NUCLEOTIDE SEQUENCE [LARGE SCALE GENOMIC DNA]</scope>
    <source>
        <strain>Twist</strain>
    </source>
</reference>
<sequence>MGYLHVLAQRGVIHATWVSALEPVSSNLAAMGDCLRSLRSKGESFLPAPRNILRAFRYPFDSVRVLIVGQDPYPTQGHPIGLSFAVDHKVRPLPGSLQNIYTEYRSDLNLDPPQHGDISLWSERGVMLLNRTLTVRPGIPSSHRGLGWEEITQTAVRALAARDVPLIAILWGRHAQELKSVLQSDRVAILESVHPSPMSATRGFFGSKPFSKANDLLRDLGSAPIDWRLT</sequence>
<feature type="chain" id="PRO_0000176158" description="Uracil-DNA glycosylase">
    <location>
        <begin position="1"/>
        <end position="230"/>
    </location>
</feature>
<feature type="active site" description="Proton acceptor" evidence="1">
    <location>
        <position position="71"/>
    </location>
</feature>
<keyword id="KW-0963">Cytoplasm</keyword>
<keyword id="KW-0227">DNA damage</keyword>
<keyword id="KW-0234">DNA repair</keyword>
<keyword id="KW-0378">Hydrolase</keyword>
<keyword id="KW-1185">Reference proteome</keyword>
<evidence type="ECO:0000255" key="1">
    <source>
        <dbReference type="HAMAP-Rule" id="MF_00148"/>
    </source>
</evidence>
<proteinExistence type="inferred from homology"/>
<gene>
    <name evidence="1" type="primary">ung</name>
    <name type="ordered locus">TWT_582</name>
</gene>
<protein>
    <recommendedName>
        <fullName evidence="1">Uracil-DNA glycosylase</fullName>
        <shortName evidence="1">UDG</shortName>
        <ecNumber evidence="1">3.2.2.27</ecNumber>
    </recommendedName>
</protein>
<comment type="function">
    <text evidence="1">Excises uracil residues from the DNA which can arise as a result of misincorporation of dUMP residues by DNA polymerase or due to deamination of cytosine.</text>
</comment>
<comment type="catalytic activity">
    <reaction evidence="1">
        <text>Hydrolyzes single-stranded DNA or mismatched double-stranded DNA and polynucleotides, releasing free uracil.</text>
        <dbReference type="EC" id="3.2.2.27"/>
    </reaction>
</comment>
<comment type="subcellular location">
    <subcellularLocation>
        <location evidence="1">Cytoplasm</location>
    </subcellularLocation>
</comment>
<comment type="similarity">
    <text evidence="1">Belongs to the uracil-DNA glycosylase (UDG) superfamily. UNG family.</text>
</comment>
<dbReference type="EC" id="3.2.2.27" evidence="1"/>
<dbReference type="EMBL" id="AE014184">
    <property type="protein sequence ID" value="AAO44679.1"/>
    <property type="molecule type" value="Genomic_DNA"/>
</dbReference>
<dbReference type="RefSeq" id="WP_011096139.1">
    <property type="nucleotide sequence ID" value="NC_004572.3"/>
</dbReference>
<dbReference type="SMR" id="P67078"/>
<dbReference type="STRING" id="203267.TWT_582"/>
<dbReference type="KEGG" id="twh:TWT_582"/>
<dbReference type="eggNOG" id="COG0692">
    <property type="taxonomic scope" value="Bacteria"/>
</dbReference>
<dbReference type="HOGENOM" id="CLU_032162_3_1_11"/>
<dbReference type="OrthoDB" id="9804372at2"/>
<dbReference type="Proteomes" id="UP000002200">
    <property type="component" value="Chromosome"/>
</dbReference>
<dbReference type="GO" id="GO:0005737">
    <property type="term" value="C:cytoplasm"/>
    <property type="evidence" value="ECO:0007669"/>
    <property type="project" value="UniProtKB-SubCell"/>
</dbReference>
<dbReference type="GO" id="GO:0004844">
    <property type="term" value="F:uracil DNA N-glycosylase activity"/>
    <property type="evidence" value="ECO:0007669"/>
    <property type="project" value="UniProtKB-UniRule"/>
</dbReference>
<dbReference type="GO" id="GO:0097510">
    <property type="term" value="P:base-excision repair, AP site formation via deaminated base removal"/>
    <property type="evidence" value="ECO:0007669"/>
    <property type="project" value="TreeGrafter"/>
</dbReference>
<dbReference type="CDD" id="cd10027">
    <property type="entry name" value="UDG-F1-like"/>
    <property type="match status" value="1"/>
</dbReference>
<dbReference type="FunFam" id="3.40.470.10:FF:000006">
    <property type="entry name" value="Uracil-DNA glycosylase"/>
    <property type="match status" value="1"/>
</dbReference>
<dbReference type="Gene3D" id="3.40.470.10">
    <property type="entry name" value="Uracil-DNA glycosylase-like domain"/>
    <property type="match status" value="1"/>
</dbReference>
<dbReference type="HAMAP" id="MF_00148">
    <property type="entry name" value="UDG"/>
    <property type="match status" value="1"/>
</dbReference>
<dbReference type="InterPro" id="IPR002043">
    <property type="entry name" value="UDG_fam1"/>
</dbReference>
<dbReference type="InterPro" id="IPR018085">
    <property type="entry name" value="Ura-DNA_Glyclase_AS"/>
</dbReference>
<dbReference type="InterPro" id="IPR005122">
    <property type="entry name" value="Uracil-DNA_glycosylase-like"/>
</dbReference>
<dbReference type="InterPro" id="IPR036895">
    <property type="entry name" value="Uracil-DNA_glycosylase-like_sf"/>
</dbReference>
<dbReference type="NCBIfam" id="NF003588">
    <property type="entry name" value="PRK05254.1-1"/>
    <property type="match status" value="1"/>
</dbReference>
<dbReference type="NCBIfam" id="NF003592">
    <property type="entry name" value="PRK05254.1-5"/>
    <property type="match status" value="1"/>
</dbReference>
<dbReference type="NCBIfam" id="TIGR00628">
    <property type="entry name" value="ung"/>
    <property type="match status" value="1"/>
</dbReference>
<dbReference type="PANTHER" id="PTHR11264">
    <property type="entry name" value="URACIL-DNA GLYCOSYLASE"/>
    <property type="match status" value="1"/>
</dbReference>
<dbReference type="PANTHER" id="PTHR11264:SF0">
    <property type="entry name" value="URACIL-DNA GLYCOSYLASE"/>
    <property type="match status" value="1"/>
</dbReference>
<dbReference type="Pfam" id="PF03167">
    <property type="entry name" value="UDG"/>
    <property type="match status" value="1"/>
</dbReference>
<dbReference type="SMART" id="SM00986">
    <property type="entry name" value="UDG"/>
    <property type="match status" value="1"/>
</dbReference>
<dbReference type="SMART" id="SM00987">
    <property type="entry name" value="UreE_C"/>
    <property type="match status" value="1"/>
</dbReference>
<dbReference type="SUPFAM" id="SSF52141">
    <property type="entry name" value="Uracil-DNA glycosylase-like"/>
    <property type="match status" value="1"/>
</dbReference>
<dbReference type="PROSITE" id="PS00130">
    <property type="entry name" value="U_DNA_GLYCOSYLASE"/>
    <property type="match status" value="1"/>
</dbReference>